<gene>
    <name evidence="1" type="primary">purQ</name>
    <name type="ordered locus">TM_1245</name>
</gene>
<reference key="1">
    <citation type="journal article" date="1999" name="Nature">
        <title>Evidence for lateral gene transfer between Archaea and Bacteria from genome sequence of Thermotoga maritima.</title>
        <authorList>
            <person name="Nelson K.E."/>
            <person name="Clayton R.A."/>
            <person name="Gill S.R."/>
            <person name="Gwinn M.L."/>
            <person name="Dodson R.J."/>
            <person name="Haft D.H."/>
            <person name="Hickey E.K."/>
            <person name="Peterson J.D."/>
            <person name="Nelson W.C."/>
            <person name="Ketchum K.A."/>
            <person name="McDonald L.A."/>
            <person name="Utterback T.R."/>
            <person name="Malek J.A."/>
            <person name="Linher K.D."/>
            <person name="Garrett M.M."/>
            <person name="Stewart A.M."/>
            <person name="Cotton M.D."/>
            <person name="Pratt M.S."/>
            <person name="Phillips C.A."/>
            <person name="Richardson D.L."/>
            <person name="Heidelberg J.F."/>
            <person name="Sutton G.G."/>
            <person name="Fleischmann R.D."/>
            <person name="Eisen J.A."/>
            <person name="White O."/>
            <person name="Salzberg S.L."/>
            <person name="Smith H.O."/>
            <person name="Venter J.C."/>
            <person name="Fraser C.M."/>
        </authorList>
    </citation>
    <scope>NUCLEOTIDE SEQUENCE [LARGE SCALE GENOMIC DNA]</scope>
    <source>
        <strain>ATCC 43589 / DSM 3109 / JCM 10099 / NBRC 100826 / MSB8</strain>
    </source>
</reference>
<reference key="2">
    <citation type="journal article" date="2008" name="Biochemistry">
        <title>Formylglycinamide ribonucleotide amidotransferase from Thermotoga maritima: structural insights into complex formation.</title>
        <authorList>
            <person name="Morar M."/>
            <person name="Hoskins A.A."/>
            <person name="Stubbe J."/>
            <person name="Ealick S.E."/>
        </authorList>
    </citation>
    <scope>X-RAY CRYSTALLOGRAPHY (3.5 ANGSTROMS)</scope>
    <scope>FUNCTION</scope>
    <scope>ACTIVE SITE</scope>
    <scope>SUBUNIT</scope>
</reference>
<name>PURQ_THEMA</name>
<keyword id="KW-0002">3D-structure</keyword>
<keyword id="KW-0067">ATP-binding</keyword>
<keyword id="KW-0963">Cytoplasm</keyword>
<keyword id="KW-0315">Glutamine amidotransferase</keyword>
<keyword id="KW-0378">Hydrolase</keyword>
<keyword id="KW-0436">Ligase</keyword>
<keyword id="KW-0547">Nucleotide-binding</keyword>
<keyword id="KW-0658">Purine biosynthesis</keyword>
<keyword id="KW-1185">Reference proteome</keyword>
<organism>
    <name type="scientific">Thermotoga maritima (strain ATCC 43589 / DSM 3109 / JCM 10099 / NBRC 100826 / MSB8)</name>
    <dbReference type="NCBI Taxonomy" id="243274"/>
    <lineage>
        <taxon>Bacteria</taxon>
        <taxon>Thermotogati</taxon>
        <taxon>Thermotogota</taxon>
        <taxon>Thermotogae</taxon>
        <taxon>Thermotogales</taxon>
        <taxon>Thermotogaceae</taxon>
        <taxon>Thermotoga</taxon>
    </lineage>
</organism>
<accession>Q9X0X2</accession>
<dbReference type="EC" id="6.3.5.3" evidence="1"/>
<dbReference type="EC" id="3.5.1.2" evidence="1"/>
<dbReference type="EMBL" id="AE000512">
    <property type="protein sequence ID" value="AAD36320.1"/>
    <property type="molecule type" value="Genomic_DNA"/>
</dbReference>
<dbReference type="PIR" id="G72276">
    <property type="entry name" value="G72276"/>
</dbReference>
<dbReference type="RefSeq" id="NP_229050.1">
    <property type="nucleotide sequence ID" value="NC_000853.1"/>
</dbReference>
<dbReference type="RefSeq" id="WP_004080023.1">
    <property type="nucleotide sequence ID" value="NZ_CP011107.1"/>
</dbReference>
<dbReference type="PDB" id="3D54">
    <property type="method" value="X-ray"/>
    <property type="resolution" value="3.50 A"/>
    <property type="chains" value="D/H/L=1-213"/>
</dbReference>
<dbReference type="PDBsum" id="3D54"/>
<dbReference type="SMR" id="Q9X0X2"/>
<dbReference type="FunCoup" id="Q9X0X2">
    <property type="interactions" value="123"/>
</dbReference>
<dbReference type="STRING" id="243274.TM_1245"/>
<dbReference type="PaxDb" id="243274-THEMA_08110"/>
<dbReference type="DNASU" id="898238"/>
<dbReference type="EnsemblBacteria" id="AAD36320">
    <property type="protein sequence ID" value="AAD36320"/>
    <property type="gene ID" value="TM_1245"/>
</dbReference>
<dbReference type="KEGG" id="tma:TM1245"/>
<dbReference type="KEGG" id="tmi:THEMA_08110"/>
<dbReference type="KEGG" id="tmm:Tmari_1250"/>
<dbReference type="KEGG" id="tmw:THMA_1270"/>
<dbReference type="eggNOG" id="COG0047">
    <property type="taxonomic scope" value="Bacteria"/>
</dbReference>
<dbReference type="InParanoid" id="Q9X0X2"/>
<dbReference type="OrthoDB" id="9804441at2"/>
<dbReference type="UniPathway" id="UPA00074">
    <property type="reaction ID" value="UER00128"/>
</dbReference>
<dbReference type="EvolutionaryTrace" id="Q9X0X2"/>
<dbReference type="Proteomes" id="UP000008183">
    <property type="component" value="Chromosome"/>
</dbReference>
<dbReference type="GO" id="GO:0005737">
    <property type="term" value="C:cytoplasm"/>
    <property type="evidence" value="ECO:0007669"/>
    <property type="project" value="UniProtKB-SubCell"/>
</dbReference>
<dbReference type="GO" id="GO:0005524">
    <property type="term" value="F:ATP binding"/>
    <property type="evidence" value="ECO:0007669"/>
    <property type="project" value="UniProtKB-KW"/>
</dbReference>
<dbReference type="GO" id="GO:0004359">
    <property type="term" value="F:glutaminase activity"/>
    <property type="evidence" value="ECO:0007669"/>
    <property type="project" value="UniProtKB-EC"/>
</dbReference>
<dbReference type="GO" id="GO:0004642">
    <property type="term" value="F:phosphoribosylformylglycinamidine synthase activity"/>
    <property type="evidence" value="ECO:0007669"/>
    <property type="project" value="UniProtKB-UniRule"/>
</dbReference>
<dbReference type="GO" id="GO:0006189">
    <property type="term" value="P:'de novo' IMP biosynthetic process"/>
    <property type="evidence" value="ECO:0007669"/>
    <property type="project" value="UniProtKB-UniRule"/>
</dbReference>
<dbReference type="CDD" id="cd01740">
    <property type="entry name" value="GATase1_FGAR_AT"/>
    <property type="match status" value="1"/>
</dbReference>
<dbReference type="Gene3D" id="3.40.50.880">
    <property type="match status" value="1"/>
</dbReference>
<dbReference type="HAMAP" id="MF_00421">
    <property type="entry name" value="PurQ"/>
    <property type="match status" value="1"/>
</dbReference>
<dbReference type="InterPro" id="IPR029062">
    <property type="entry name" value="Class_I_gatase-like"/>
</dbReference>
<dbReference type="InterPro" id="IPR010075">
    <property type="entry name" value="PRibForGlyAmidine_synth_PurQ"/>
</dbReference>
<dbReference type="NCBIfam" id="TIGR01737">
    <property type="entry name" value="FGAM_synth_I"/>
    <property type="match status" value="1"/>
</dbReference>
<dbReference type="NCBIfam" id="NF002957">
    <property type="entry name" value="PRK03619.1"/>
    <property type="match status" value="1"/>
</dbReference>
<dbReference type="PANTHER" id="PTHR47552">
    <property type="entry name" value="PHOSPHORIBOSYLFORMYLGLYCINAMIDINE SYNTHASE SUBUNIT PURQ"/>
    <property type="match status" value="1"/>
</dbReference>
<dbReference type="PANTHER" id="PTHR47552:SF1">
    <property type="entry name" value="PHOSPHORIBOSYLFORMYLGLYCINAMIDINE SYNTHASE SUBUNIT PURQ"/>
    <property type="match status" value="1"/>
</dbReference>
<dbReference type="Pfam" id="PF13507">
    <property type="entry name" value="GATase_5"/>
    <property type="match status" value="1"/>
</dbReference>
<dbReference type="PIRSF" id="PIRSF001586">
    <property type="entry name" value="FGAM_synth_I"/>
    <property type="match status" value="1"/>
</dbReference>
<dbReference type="SMART" id="SM01211">
    <property type="entry name" value="GATase_5"/>
    <property type="match status" value="1"/>
</dbReference>
<dbReference type="SUPFAM" id="SSF52317">
    <property type="entry name" value="Class I glutamine amidotransferase-like"/>
    <property type="match status" value="1"/>
</dbReference>
<dbReference type="PROSITE" id="PS51273">
    <property type="entry name" value="GATASE_TYPE_1"/>
    <property type="match status" value="1"/>
</dbReference>
<comment type="function">
    <text evidence="1 2">Part of the phosphoribosylformylglycinamidine synthase complex involved in the purines biosynthetic pathway. Catalyzes the ATP-dependent conversion of formylglycinamide ribonucleotide (FGAR) and glutamine to yield formylglycinamidine ribonucleotide (FGAM) and glutamate. The FGAM synthase complex is composed of three subunits. PurQ produces an ammonia molecule by converting glutamine to glutamate. PurL transfers the ammonia molecule to FGAR to form FGAM in an ATP-dependent manner. PurS interacts with PurQ and PurL and is thought to assist in the transfer of the ammonia molecule from PurQ to PurL.</text>
</comment>
<comment type="catalytic activity">
    <reaction evidence="1">
        <text>N(2)-formyl-N(1)-(5-phospho-beta-D-ribosyl)glycinamide + L-glutamine + ATP + H2O = 2-formamido-N(1)-(5-O-phospho-beta-D-ribosyl)acetamidine + L-glutamate + ADP + phosphate + H(+)</text>
        <dbReference type="Rhea" id="RHEA:17129"/>
        <dbReference type="ChEBI" id="CHEBI:15377"/>
        <dbReference type="ChEBI" id="CHEBI:15378"/>
        <dbReference type="ChEBI" id="CHEBI:29985"/>
        <dbReference type="ChEBI" id="CHEBI:30616"/>
        <dbReference type="ChEBI" id="CHEBI:43474"/>
        <dbReference type="ChEBI" id="CHEBI:58359"/>
        <dbReference type="ChEBI" id="CHEBI:147286"/>
        <dbReference type="ChEBI" id="CHEBI:147287"/>
        <dbReference type="ChEBI" id="CHEBI:456216"/>
        <dbReference type="EC" id="6.3.5.3"/>
    </reaction>
</comment>
<comment type="catalytic activity">
    <reaction evidence="1">
        <text>L-glutamine + H2O = L-glutamate + NH4(+)</text>
        <dbReference type="Rhea" id="RHEA:15889"/>
        <dbReference type="ChEBI" id="CHEBI:15377"/>
        <dbReference type="ChEBI" id="CHEBI:28938"/>
        <dbReference type="ChEBI" id="CHEBI:29985"/>
        <dbReference type="ChEBI" id="CHEBI:58359"/>
        <dbReference type="EC" id="3.5.1.2"/>
    </reaction>
</comment>
<comment type="pathway">
    <text evidence="1">Purine metabolism; IMP biosynthesis via de novo pathway; 5-amino-1-(5-phospho-D-ribosyl)imidazole from N(2)-formyl-N(1)-(5-phospho-D-ribosyl)glycinamide: step 1/2.</text>
</comment>
<comment type="subunit">
    <text evidence="1 2">Part of the FGAM synthase complex composed of 1 PurL, 1 PurQ and 2 PurS subunits.</text>
</comment>
<comment type="subcellular location">
    <subcellularLocation>
        <location evidence="1">Cytoplasm</location>
    </subcellularLocation>
</comment>
<feature type="chain" id="PRO_0000100598" description="Phosphoribosylformylglycinamidine synthase subunit PurQ">
    <location>
        <begin position="1"/>
        <end position="213"/>
    </location>
</feature>
<feature type="domain" description="Glutamine amidotransferase type-1" evidence="1">
    <location>
        <begin position="5"/>
        <end position="213"/>
    </location>
</feature>
<feature type="active site" description="Nucleophile" evidence="3">
    <location>
        <position position="86"/>
    </location>
</feature>
<feature type="active site" evidence="3">
    <location>
        <position position="186"/>
    </location>
</feature>
<feature type="active site" evidence="3">
    <location>
        <position position="188"/>
    </location>
</feature>
<feature type="strand" evidence="4">
    <location>
        <begin position="4"/>
        <end position="8"/>
    </location>
</feature>
<feature type="strand" evidence="4">
    <location>
        <begin position="13"/>
        <end position="15"/>
    </location>
</feature>
<feature type="helix" evidence="4">
    <location>
        <begin position="16"/>
        <end position="24"/>
    </location>
</feature>
<feature type="turn" evidence="4">
    <location>
        <begin position="25"/>
        <end position="27"/>
    </location>
</feature>
<feature type="strand" evidence="4">
    <location>
        <begin position="29"/>
        <end position="33"/>
    </location>
</feature>
<feature type="strand" evidence="4">
    <location>
        <begin position="43"/>
        <end position="47"/>
    </location>
</feature>
<feature type="helix" evidence="4">
    <location>
        <begin position="52"/>
        <end position="55"/>
    </location>
</feature>
<feature type="helix" evidence="4">
    <location>
        <begin position="61"/>
        <end position="64"/>
    </location>
</feature>
<feature type="helix" evidence="4">
    <location>
        <begin position="69"/>
        <end position="78"/>
    </location>
</feature>
<feature type="strand" evidence="4">
    <location>
        <begin position="81"/>
        <end position="84"/>
    </location>
</feature>
<feature type="helix" evidence="4">
    <location>
        <begin position="86"/>
        <end position="94"/>
    </location>
</feature>
<feature type="strand" evidence="4">
    <location>
        <begin position="100"/>
        <end position="103"/>
    </location>
</feature>
<feature type="strand" evidence="4">
    <location>
        <begin position="106"/>
        <end position="109"/>
    </location>
</feature>
<feature type="strand" evidence="4">
    <location>
        <begin position="114"/>
        <end position="119"/>
    </location>
</feature>
<feature type="strand" evidence="4">
    <location>
        <begin position="135"/>
        <end position="139"/>
    </location>
</feature>
<feature type="strand" evidence="4">
    <location>
        <begin position="142"/>
        <end position="144"/>
    </location>
</feature>
<feature type="strand" evidence="4">
    <location>
        <begin position="146"/>
        <end position="148"/>
    </location>
</feature>
<feature type="strand" evidence="4">
    <location>
        <begin position="154"/>
        <end position="161"/>
    </location>
</feature>
<feature type="helix" evidence="4">
    <location>
        <begin position="167"/>
        <end position="169"/>
    </location>
</feature>
<feature type="strand" evidence="4">
    <location>
        <begin position="170"/>
        <end position="174"/>
    </location>
</feature>
<feature type="strand" evidence="4">
    <location>
        <begin position="176"/>
        <end position="178"/>
    </location>
</feature>
<feature type="strand" evidence="4">
    <location>
        <begin position="180"/>
        <end position="183"/>
    </location>
</feature>
<feature type="turn" evidence="4">
    <location>
        <begin position="188"/>
        <end position="191"/>
    </location>
</feature>
<feature type="turn" evidence="4">
    <location>
        <begin position="193"/>
        <end position="196"/>
    </location>
</feature>
<feature type="helix" evidence="4">
    <location>
        <begin position="202"/>
        <end position="210"/>
    </location>
</feature>
<proteinExistence type="evidence at protein level"/>
<protein>
    <recommendedName>
        <fullName evidence="1">Phosphoribosylformylglycinamidine synthase subunit PurQ</fullName>
        <shortName evidence="1">FGAM synthase</shortName>
        <ecNumber evidence="1">6.3.5.3</ecNumber>
    </recommendedName>
    <alternativeName>
        <fullName evidence="1">Formylglycinamide ribonucleotide amidotransferase subunit I</fullName>
        <shortName evidence="1">FGAR amidotransferase I</shortName>
        <shortName evidence="1">FGAR-AT I</shortName>
    </alternativeName>
    <alternativeName>
        <fullName evidence="1">Glutaminase PurQ</fullName>
        <ecNumber evidence="1">3.5.1.2</ecNumber>
    </alternativeName>
    <alternativeName>
        <fullName evidence="1">Phosphoribosylformylglycinamidine synthase subunit I</fullName>
    </alternativeName>
</protein>
<sequence length="213" mass="23588">MKPRACVVVYPGSNCDRDAYHALEINGFEPSYVGLDDKLDDYELIILPGGFSYGDYLRPGAVAAREKIAFEIAKAAERGKLIMGICNGFQILIEMGLLKGALLQNSSGKFICKWVDLIVENNDTPFTNAFEKGEKIRIPIAHGFGRYVKIDDVNVVLRYVKDVNGSDERIAGVLNESGNVFGLMPHPERAVEELIGGEDGKKVFQSILNYLKR</sequence>
<evidence type="ECO:0000255" key="1">
    <source>
        <dbReference type="HAMAP-Rule" id="MF_00421"/>
    </source>
</evidence>
<evidence type="ECO:0000269" key="2">
    <source>
    </source>
</evidence>
<evidence type="ECO:0000305" key="3">
    <source>
    </source>
</evidence>
<evidence type="ECO:0007829" key="4">
    <source>
        <dbReference type="PDB" id="3D54"/>
    </source>
</evidence>